<protein>
    <recommendedName>
        <fullName evidence="1">Ribosomal RNA small subunit methyltransferase G</fullName>
        <ecNumber evidence="1">2.1.1.-</ecNumber>
    </recommendedName>
    <alternativeName>
        <fullName evidence="1">16S rRNA 7-methylguanosine methyltransferase</fullName>
        <shortName evidence="1">16S rRNA m7G methyltransferase</shortName>
    </alternativeName>
</protein>
<feature type="chain" id="PRO_0000184245" description="Ribosomal RNA small subunit methyltransferase G">
    <location>
        <begin position="1"/>
        <end position="253"/>
    </location>
</feature>
<feature type="region of interest" description="Disordered" evidence="2">
    <location>
        <begin position="228"/>
        <end position="253"/>
    </location>
</feature>
<feature type="binding site" evidence="1">
    <location>
        <position position="84"/>
    </location>
    <ligand>
        <name>S-adenosyl-L-methionine</name>
        <dbReference type="ChEBI" id="CHEBI:59789"/>
    </ligand>
</feature>
<feature type="binding site" evidence="1">
    <location>
        <position position="89"/>
    </location>
    <ligand>
        <name>S-adenosyl-L-methionine</name>
        <dbReference type="ChEBI" id="CHEBI:59789"/>
    </ligand>
</feature>
<feature type="binding site" evidence="1">
    <location>
        <begin position="135"/>
        <end position="136"/>
    </location>
    <ligand>
        <name>S-adenosyl-L-methionine</name>
        <dbReference type="ChEBI" id="CHEBI:59789"/>
    </ligand>
</feature>
<feature type="binding site" evidence="1">
    <location>
        <position position="154"/>
    </location>
    <ligand>
        <name>S-adenosyl-L-methionine</name>
        <dbReference type="ChEBI" id="CHEBI:59789"/>
    </ligand>
</feature>
<accession>Q9RYD6</accession>
<reference key="1">
    <citation type="journal article" date="1999" name="Science">
        <title>Genome sequence of the radioresistant bacterium Deinococcus radiodurans R1.</title>
        <authorList>
            <person name="White O."/>
            <person name="Eisen J.A."/>
            <person name="Heidelberg J.F."/>
            <person name="Hickey E.K."/>
            <person name="Peterson J.D."/>
            <person name="Dodson R.J."/>
            <person name="Haft D.H."/>
            <person name="Gwinn M.L."/>
            <person name="Nelson W.C."/>
            <person name="Richardson D.L."/>
            <person name="Moffat K.S."/>
            <person name="Qin H."/>
            <person name="Jiang L."/>
            <person name="Pamphile W."/>
            <person name="Crosby M."/>
            <person name="Shen M."/>
            <person name="Vamathevan J.J."/>
            <person name="Lam P."/>
            <person name="McDonald L.A."/>
            <person name="Utterback T.R."/>
            <person name="Zalewski C."/>
            <person name="Makarova K.S."/>
            <person name="Aravind L."/>
            <person name="Daly M.J."/>
            <person name="Minton K.W."/>
            <person name="Fleischmann R.D."/>
            <person name="Ketchum K.A."/>
            <person name="Nelson K.E."/>
            <person name="Salzberg S.L."/>
            <person name="Smith H.O."/>
            <person name="Venter J.C."/>
            <person name="Fraser C.M."/>
        </authorList>
    </citation>
    <scope>NUCLEOTIDE SEQUENCE [LARGE SCALE GENOMIC DNA]</scope>
    <source>
        <strain>ATCC 13939 / DSM 20539 / JCM 16871 / CCUG 27074 / LMG 4051 / NBRC 15346 / NCIMB 9279 / VKM B-1422 / R1</strain>
    </source>
</reference>
<proteinExistence type="inferred from homology"/>
<comment type="function">
    <text evidence="1">Specifically methylates the N7 position of a guanine in 16S rRNA.</text>
</comment>
<comment type="subcellular location">
    <subcellularLocation>
        <location evidence="1">Cytoplasm</location>
    </subcellularLocation>
</comment>
<comment type="similarity">
    <text evidence="1">Belongs to the methyltransferase superfamily. RNA methyltransferase RsmG family.</text>
</comment>
<organism>
    <name type="scientific">Deinococcus radiodurans (strain ATCC 13939 / DSM 20539 / JCM 16871 / CCUG 27074 / LMG 4051 / NBRC 15346 / NCIMB 9279 / VKM B-1422 / R1)</name>
    <dbReference type="NCBI Taxonomy" id="243230"/>
    <lineage>
        <taxon>Bacteria</taxon>
        <taxon>Thermotogati</taxon>
        <taxon>Deinococcota</taxon>
        <taxon>Deinococci</taxon>
        <taxon>Deinococcales</taxon>
        <taxon>Deinococcaceae</taxon>
        <taxon>Deinococcus</taxon>
    </lineage>
</organism>
<gene>
    <name evidence="1" type="primary">rsmG</name>
    <name type="ordered locus">DR_0014</name>
</gene>
<dbReference type="EC" id="2.1.1.-" evidence="1"/>
<dbReference type="EMBL" id="AE000513">
    <property type="protein sequence ID" value="AAF09607.1"/>
    <property type="molecule type" value="Genomic_DNA"/>
</dbReference>
<dbReference type="PIR" id="E75570">
    <property type="entry name" value="E75570"/>
</dbReference>
<dbReference type="RefSeq" id="NP_293740.1">
    <property type="nucleotide sequence ID" value="NC_001263.1"/>
</dbReference>
<dbReference type="RefSeq" id="WP_010886662.1">
    <property type="nucleotide sequence ID" value="NC_001263.1"/>
</dbReference>
<dbReference type="SMR" id="Q9RYD6"/>
<dbReference type="FunCoup" id="Q9RYD6">
    <property type="interactions" value="346"/>
</dbReference>
<dbReference type="STRING" id="243230.DR_0014"/>
<dbReference type="PaxDb" id="243230-DR_0014"/>
<dbReference type="EnsemblBacteria" id="AAF09607">
    <property type="protein sequence ID" value="AAF09607"/>
    <property type="gene ID" value="DR_0014"/>
</dbReference>
<dbReference type="GeneID" id="69516241"/>
<dbReference type="KEGG" id="dra:DR_0014"/>
<dbReference type="PATRIC" id="fig|243230.17.peg.180"/>
<dbReference type="eggNOG" id="COG0357">
    <property type="taxonomic scope" value="Bacteria"/>
</dbReference>
<dbReference type="HOGENOM" id="CLU_065341_0_1_0"/>
<dbReference type="InParanoid" id="Q9RYD6"/>
<dbReference type="OrthoDB" id="9808773at2"/>
<dbReference type="Proteomes" id="UP000002524">
    <property type="component" value="Chromosome 1"/>
</dbReference>
<dbReference type="GO" id="GO:0005829">
    <property type="term" value="C:cytosol"/>
    <property type="evidence" value="ECO:0000318"/>
    <property type="project" value="GO_Central"/>
</dbReference>
<dbReference type="GO" id="GO:0070043">
    <property type="term" value="F:rRNA (guanine-N7-)-methyltransferase activity"/>
    <property type="evidence" value="ECO:0000318"/>
    <property type="project" value="GO_Central"/>
</dbReference>
<dbReference type="CDD" id="cd02440">
    <property type="entry name" value="AdoMet_MTases"/>
    <property type="match status" value="1"/>
</dbReference>
<dbReference type="FunFam" id="3.40.50.150:FF:000041">
    <property type="entry name" value="Ribosomal RNA small subunit methyltransferase G"/>
    <property type="match status" value="1"/>
</dbReference>
<dbReference type="Gene3D" id="3.40.50.150">
    <property type="entry name" value="Vaccinia Virus protein VP39"/>
    <property type="match status" value="1"/>
</dbReference>
<dbReference type="HAMAP" id="MF_00074">
    <property type="entry name" value="16SrRNA_methyltr_G"/>
    <property type="match status" value="1"/>
</dbReference>
<dbReference type="InterPro" id="IPR003682">
    <property type="entry name" value="rRNA_ssu_MeTfrase_G"/>
</dbReference>
<dbReference type="InterPro" id="IPR029063">
    <property type="entry name" value="SAM-dependent_MTases_sf"/>
</dbReference>
<dbReference type="NCBIfam" id="TIGR00138">
    <property type="entry name" value="rsmG_gidB"/>
    <property type="match status" value="1"/>
</dbReference>
<dbReference type="PANTHER" id="PTHR31760">
    <property type="entry name" value="S-ADENOSYL-L-METHIONINE-DEPENDENT METHYLTRANSFERASES SUPERFAMILY PROTEIN"/>
    <property type="match status" value="1"/>
</dbReference>
<dbReference type="PANTHER" id="PTHR31760:SF0">
    <property type="entry name" value="S-ADENOSYL-L-METHIONINE-DEPENDENT METHYLTRANSFERASES SUPERFAMILY PROTEIN"/>
    <property type="match status" value="1"/>
</dbReference>
<dbReference type="Pfam" id="PF02527">
    <property type="entry name" value="GidB"/>
    <property type="match status" value="1"/>
</dbReference>
<dbReference type="SUPFAM" id="SSF53335">
    <property type="entry name" value="S-adenosyl-L-methionine-dependent methyltransferases"/>
    <property type="match status" value="1"/>
</dbReference>
<evidence type="ECO:0000255" key="1">
    <source>
        <dbReference type="HAMAP-Rule" id="MF_00074"/>
    </source>
</evidence>
<evidence type="ECO:0000256" key="2">
    <source>
        <dbReference type="SAM" id="MobiDB-lite"/>
    </source>
</evidence>
<keyword id="KW-0963">Cytoplasm</keyword>
<keyword id="KW-0489">Methyltransferase</keyword>
<keyword id="KW-1185">Reference proteome</keyword>
<keyword id="KW-0698">rRNA processing</keyword>
<keyword id="KW-0949">S-adenosyl-L-methionine</keyword>
<keyword id="KW-0808">Transferase</keyword>
<sequence length="253" mass="27523">MIPDALTPAGRELLRRGADDLGLDVAPHEEQFARLLALLRAGNERLNLTALKTEEDIVLKHFVDSLTTLRGGHLDGEWKTLDLGTGAGFPALPLAILRPELRLTPLDSIRKKIDFVRETAAELGLSNVTPQVGRAETLGQSAEHRGSYDRVVARAVAALPVLAELALPLLRVGGVFVAQKGPLSEEELDAGRRAAGEVGGRIIEVDPFTLPVSGDARTLIVLEKQRPTPAKYPRREGVPTHQPLFWKAKEQSR</sequence>
<name>RSMG_DEIRA</name>